<sequence length="326" mass="38067">MIRVKREFTVKENALRLDLYLSGNFEVFTRSQIKRRNVEAFKKSNGKFLKIKLSKPVFKDDEILIEFDEESSQIDCLRPSNIPIAIIYEDSNVIVLNKPQGILSHPGISHWDDTVVNFLLYHIKSLKINFNEEKIRPGIVHRLDKDTSGVLICAKNISTLRFLAQQFKDKRTNKVYIAIVKGNFNSFFGSIESFIDRDKHNRKKFSVSKDRGKKALTEYRLLLNFGEYSLLALKPKTGRTHQLRVHMKYLNFPILGDEVYGRVDGSLKKITLMLHSYKLEIDVGKNSFKKFISEFPKRFVIFLSNFYKSDELNLIIDNLVLFLRDF</sequence>
<gene>
    <name evidence="2" type="primary">rluD</name>
    <name evidence="3" type="synonym">yfiI</name>
    <name type="ordered locus">BB_0018</name>
</gene>
<dbReference type="EC" id="5.4.99.23" evidence="2"/>
<dbReference type="EMBL" id="Y09142">
    <property type="protein sequence ID" value="CAA70352.1"/>
    <property type="molecule type" value="Genomic_DNA"/>
</dbReference>
<dbReference type="EMBL" id="AE000783">
    <property type="status" value="NOT_ANNOTATED_CDS"/>
    <property type="molecule type" value="Genomic_DNA"/>
</dbReference>
<dbReference type="PIR" id="B70102">
    <property type="entry name" value="B70102"/>
</dbReference>
<dbReference type="RefSeq" id="WP_002658364.1">
    <property type="nucleotide sequence ID" value="NC_001318.1"/>
</dbReference>
<dbReference type="SMR" id="P70870"/>
<dbReference type="Proteomes" id="UP000001807">
    <property type="component" value="Chromosome"/>
</dbReference>
<dbReference type="GO" id="GO:0005737">
    <property type="term" value="C:cytoplasm"/>
    <property type="evidence" value="ECO:0007669"/>
    <property type="project" value="UniProtKB-SubCell"/>
</dbReference>
<dbReference type="GO" id="GO:0160140">
    <property type="term" value="F:23S rRNA pseudouridine(1911/1915/1917) synthase activity"/>
    <property type="evidence" value="ECO:0007669"/>
    <property type="project" value="UniProtKB-EC"/>
</dbReference>
<dbReference type="GO" id="GO:0003723">
    <property type="term" value="F:RNA binding"/>
    <property type="evidence" value="ECO:0007669"/>
    <property type="project" value="InterPro"/>
</dbReference>
<dbReference type="GO" id="GO:0000455">
    <property type="term" value="P:enzyme-directed rRNA pseudouridine synthesis"/>
    <property type="evidence" value="ECO:0007669"/>
    <property type="project" value="TreeGrafter"/>
</dbReference>
<dbReference type="CDD" id="cd02869">
    <property type="entry name" value="PseudoU_synth_RluA_like"/>
    <property type="match status" value="1"/>
</dbReference>
<dbReference type="Gene3D" id="3.30.2350.10">
    <property type="entry name" value="Pseudouridine synthase"/>
    <property type="match status" value="1"/>
</dbReference>
<dbReference type="InterPro" id="IPR020103">
    <property type="entry name" value="PsdUridine_synth_cat_dom_sf"/>
</dbReference>
<dbReference type="InterPro" id="IPR006224">
    <property type="entry name" value="PsdUridine_synth_RluA-like_CS"/>
</dbReference>
<dbReference type="InterPro" id="IPR006225">
    <property type="entry name" value="PsdUridine_synth_RluC/D"/>
</dbReference>
<dbReference type="InterPro" id="IPR006145">
    <property type="entry name" value="PsdUridine_synth_RsuA/RluA"/>
</dbReference>
<dbReference type="InterPro" id="IPR050188">
    <property type="entry name" value="RluA_PseudoU_synthase"/>
</dbReference>
<dbReference type="NCBIfam" id="TIGR00005">
    <property type="entry name" value="rluA_subfam"/>
    <property type="match status" value="1"/>
</dbReference>
<dbReference type="PANTHER" id="PTHR21600">
    <property type="entry name" value="MITOCHONDRIAL RNA PSEUDOURIDINE SYNTHASE"/>
    <property type="match status" value="1"/>
</dbReference>
<dbReference type="PANTHER" id="PTHR21600:SF44">
    <property type="entry name" value="RIBOSOMAL LARGE SUBUNIT PSEUDOURIDINE SYNTHASE D"/>
    <property type="match status" value="1"/>
</dbReference>
<dbReference type="Pfam" id="PF00849">
    <property type="entry name" value="PseudoU_synth_2"/>
    <property type="match status" value="1"/>
</dbReference>
<dbReference type="SUPFAM" id="SSF55120">
    <property type="entry name" value="Pseudouridine synthase"/>
    <property type="match status" value="1"/>
</dbReference>
<dbReference type="PROSITE" id="PS01129">
    <property type="entry name" value="PSI_RLU"/>
    <property type="match status" value="1"/>
</dbReference>
<reference key="1">
    <citation type="submission" date="1996-11" db="EMBL/GenBank/DDBJ databases">
        <title>Homologues of helicase genes, priA and ruvAB in the left telomeric region of the linear chromosome of Borrelia burgdorferi.</title>
        <authorList>
            <person name="Boursaux-Eude C."/>
            <person name="Margarita D."/>
            <person name="Belfaiza J."/>
            <person name="Old I.G."/>
            <person name="Saint-Girons I."/>
        </authorList>
    </citation>
    <scope>NUCLEOTIDE SEQUENCE [GENOMIC DNA]</scope>
    <source>
        <strain>HB19</strain>
    </source>
</reference>
<reference key="2">
    <citation type="journal article" date="1997" name="Nature">
        <title>Genomic sequence of a Lyme disease spirochaete, Borrelia burgdorferi.</title>
        <authorList>
            <person name="Fraser C.M."/>
            <person name="Casjens S."/>
            <person name="Huang W.M."/>
            <person name="Sutton G.G."/>
            <person name="Clayton R.A."/>
            <person name="Lathigra R."/>
            <person name="White O."/>
            <person name="Ketchum K.A."/>
            <person name="Dodson R.J."/>
            <person name="Hickey E.K."/>
            <person name="Gwinn M.L."/>
            <person name="Dougherty B.A."/>
            <person name="Tomb J.-F."/>
            <person name="Fleischmann R.D."/>
            <person name="Richardson D.L."/>
            <person name="Peterson J.D."/>
            <person name="Kerlavage A.R."/>
            <person name="Quackenbush J."/>
            <person name="Salzberg S.L."/>
            <person name="Hanson M."/>
            <person name="van Vugt R."/>
            <person name="Palmer N."/>
            <person name="Adams M.D."/>
            <person name="Gocayne J.D."/>
            <person name="Weidman J.F."/>
            <person name="Utterback T.R."/>
            <person name="Watthey L."/>
            <person name="McDonald L.A."/>
            <person name="Artiach P."/>
            <person name="Bowman C."/>
            <person name="Garland S.A."/>
            <person name="Fujii C."/>
            <person name="Cotton M.D."/>
            <person name="Horst K."/>
            <person name="Roberts K.M."/>
            <person name="Hatch B."/>
            <person name="Smith H.O."/>
            <person name="Venter J.C."/>
        </authorList>
    </citation>
    <scope>NUCLEOTIDE SEQUENCE [LARGE SCALE GENOMIC DNA]</scope>
    <source>
        <strain>ATCC 35210 / DSM 4680 / CIP 102532 / B31</strain>
    </source>
</reference>
<evidence type="ECO:0000250" key="1"/>
<evidence type="ECO:0000250" key="2">
    <source>
        <dbReference type="UniProtKB" id="P33643"/>
    </source>
</evidence>
<evidence type="ECO:0000303" key="3">
    <source ref="1"/>
</evidence>
<evidence type="ECO:0000305" key="4"/>
<comment type="function">
    <text evidence="2">Responsible for synthesis of pseudouridine from uracil at positions 1911, 1915 and 1917 in 23S ribosomal RNA.</text>
</comment>
<comment type="catalytic activity">
    <reaction evidence="2">
        <text>uridine(1911/1915/1917) in 23S rRNA = pseudouridine(1911/1915/1917) in 23S rRNA</text>
        <dbReference type="Rhea" id="RHEA:42524"/>
        <dbReference type="Rhea" id="RHEA-COMP:10097"/>
        <dbReference type="Rhea" id="RHEA-COMP:10098"/>
        <dbReference type="ChEBI" id="CHEBI:65314"/>
        <dbReference type="ChEBI" id="CHEBI:65315"/>
        <dbReference type="EC" id="5.4.99.23"/>
    </reaction>
</comment>
<comment type="subcellular location">
    <subcellularLocation>
        <location evidence="2">Cytoplasm</location>
    </subcellularLocation>
    <text evidence="2">Associates with late stage pre-50S ribosomal subunits.</text>
</comment>
<comment type="similarity">
    <text evidence="4">Belongs to the pseudouridine synthase RluA family.</text>
</comment>
<feature type="chain" id="PRO_0000162683" description="Ribosomal large subunit pseudouridine synthase D">
    <location>
        <begin position="1"/>
        <end position="326"/>
    </location>
</feature>
<feature type="active site" evidence="1">
    <location>
        <position position="144"/>
    </location>
</feature>
<feature type="sequence conflict" description="In Ref. 1; CAA70352." evidence="4" ref="1">
    <original>T</original>
    <variation>I</variation>
    <location>
        <position position="172"/>
    </location>
</feature>
<feature type="sequence conflict" description="In Ref. 1; CAA70352." evidence="4" ref="1">
    <original>K</original>
    <variation>E</variation>
    <location>
        <position position="268"/>
    </location>
</feature>
<feature type="sequence conflict" description="In Ref. 1; CAA70352." evidence="4" ref="1">
    <original>FVIFLSNFYKSDELNLIIDNLVLFLRDF</original>
    <variation>ICYFFVKFLQE</variation>
    <location>
        <begin position="299"/>
        <end position="326"/>
    </location>
</feature>
<organism>
    <name type="scientific">Borreliella burgdorferi (strain ATCC 35210 / DSM 4680 / CIP 102532 / B31)</name>
    <name type="common">Borrelia burgdorferi</name>
    <dbReference type="NCBI Taxonomy" id="224326"/>
    <lineage>
        <taxon>Bacteria</taxon>
        <taxon>Pseudomonadati</taxon>
        <taxon>Spirochaetota</taxon>
        <taxon>Spirochaetia</taxon>
        <taxon>Spirochaetales</taxon>
        <taxon>Borreliaceae</taxon>
        <taxon>Borreliella</taxon>
    </lineage>
</organism>
<protein>
    <recommendedName>
        <fullName evidence="2">Ribosomal large subunit pseudouridine synthase D</fullName>
        <ecNumber evidence="2">5.4.99.23</ecNumber>
    </recommendedName>
    <alternativeName>
        <fullName>23S rRNA pseudouridine(1911/1915/1917) synthase</fullName>
    </alternativeName>
    <alternativeName>
        <fullName>rRNA pseudouridylate synthase D</fullName>
    </alternativeName>
    <alternativeName>
        <fullName>rRNA-uridine isomerase D</fullName>
    </alternativeName>
</protein>
<name>RLUD_BORBU</name>
<proteinExistence type="inferred from homology"/>
<accession>P70870</accession>
<accession>O51050</accession>
<keyword id="KW-0963">Cytoplasm</keyword>
<keyword id="KW-0413">Isomerase</keyword>
<keyword id="KW-1185">Reference proteome</keyword>
<keyword id="KW-0698">rRNA processing</keyword>